<organism>
    <name type="scientific">Schizosaccharomyces pombe (strain 972 / ATCC 24843)</name>
    <name type="common">Fission yeast</name>
    <dbReference type="NCBI Taxonomy" id="284812"/>
    <lineage>
        <taxon>Eukaryota</taxon>
        <taxon>Fungi</taxon>
        <taxon>Dikarya</taxon>
        <taxon>Ascomycota</taxon>
        <taxon>Taphrinomycotina</taxon>
        <taxon>Schizosaccharomycetes</taxon>
        <taxon>Schizosaccharomycetales</taxon>
        <taxon>Schizosaccharomycetaceae</taxon>
        <taxon>Schizosaccharomyces</taxon>
    </lineage>
</organism>
<proteinExistence type="evidence at protein level"/>
<name>RAD50_SCHPO</name>
<comment type="function">
    <text evidence="3 4 7 9">Component of the MRN complex, which plays a central role in double-strand break (DSB) repair, DNA recombination, maintenance of telomere integrity and meiosis (PubMed:11726502, PubMed:15654094). The MRN complex is involved in the repair of DNA double-strand breaks (DSBs) via homologous recombination (HR), an error-free mechanism which primarily occurs during S and G2 phases (By similarity). The complex (1) mediates the end resection of damaged DNA, which generates proper single-stranded DNA, a key initial steps in HR, and is (2) required for the recruitment of other repair factors and efficient activation of TEL1/ATM and ATR upon DNA damage (By similarity). The MRN complex possesses single-strand endonuclease activity and double-strand-specific 3'-5' exonuclease activity, which are provided by MRE11, to initiate end resection, which is required for single-strand invasion and recombination (By similarity). Within the complex, rad50 is both required to bind DNA ends and hold them in close proximity and regulate the activity of rad32 (By similarity). Rad50 provides an ATP-dependent control of rad32 by positioning DNA ends into the rad32 active site: ATP-binding induces a large structural change from an open form with accessible rad32 nuclease sites into a closed form (By similarity).</text>
</comment>
<comment type="catalytic activity">
    <reaction evidence="3">
        <text>ATP + H2O = ADP + phosphate + H(+)</text>
        <dbReference type="Rhea" id="RHEA:13065"/>
        <dbReference type="ChEBI" id="CHEBI:15377"/>
        <dbReference type="ChEBI" id="CHEBI:15378"/>
        <dbReference type="ChEBI" id="CHEBI:30616"/>
        <dbReference type="ChEBI" id="CHEBI:43474"/>
        <dbReference type="ChEBI" id="CHEBI:456216"/>
    </reaction>
</comment>
<comment type="cofactor">
    <cofactor evidence="3">
        <name>Zn(2+)</name>
        <dbReference type="ChEBI" id="CHEBI:29105"/>
    </cofactor>
    <text evidence="3">Binds 1 zinc ion per homodimer.</text>
</comment>
<comment type="subunit">
    <text evidence="7 8 9">Forms a multisubunit endonuclease complex, MRN, together with nbn and rad32 (PubMed:12944482, PubMed:15654094). Interacts with the rad21 cohesin complex (PubMed:11726502).</text>
</comment>
<comment type="subcellular location">
    <subcellularLocation>
        <location evidence="8">Nucleus</location>
    </subcellularLocation>
    <subcellularLocation>
        <location evidence="8">Chromosome</location>
    </subcellularLocation>
</comment>
<comment type="domain">
    <text evidence="1">The zinc-hook, which separates the large intramolecular coiled coil regions, contains 2 Cys residues that coordinate one molecule of zinc with the help of the 2 Cys residues of the zinc-hook of another rad50 molecule, thereby forming a V-shaped homodimer.</text>
</comment>
<comment type="similarity">
    <text evidence="10">Belongs to the SMC family. RAD50 subfamily.</text>
</comment>
<protein>
    <recommendedName>
        <fullName>DNA repair protein rad50</fullName>
        <ecNumber evidence="3">3.6.-.-</ecNumber>
    </recommendedName>
</protein>
<keyword id="KW-0067">ATP-binding</keyword>
<keyword id="KW-0158">Chromosome</keyword>
<keyword id="KW-0175">Coiled coil</keyword>
<keyword id="KW-0227">DNA damage</keyword>
<keyword id="KW-0234">DNA repair</keyword>
<keyword id="KW-0378">Hydrolase</keyword>
<keyword id="KW-0460">Magnesium</keyword>
<keyword id="KW-0469">Meiosis</keyword>
<keyword id="KW-0479">Metal-binding</keyword>
<keyword id="KW-0547">Nucleotide-binding</keyword>
<keyword id="KW-0539">Nucleus</keyword>
<keyword id="KW-1185">Reference proteome</keyword>
<keyword id="KW-0862">Zinc</keyword>
<feature type="chain" id="PRO_0000138647" description="DNA repair protein rad50">
    <location>
        <begin position="1"/>
        <end position="1285"/>
    </location>
</feature>
<feature type="domain" description="Zinc-hook" evidence="6">
    <location>
        <begin position="630"/>
        <end position="726"/>
    </location>
</feature>
<feature type="coiled-coil region" evidence="5">
    <location>
        <begin position="295"/>
        <end position="365"/>
    </location>
</feature>
<feature type="coiled-coil region" evidence="5">
    <location>
        <begin position="630"/>
        <end position="668"/>
    </location>
</feature>
<feature type="coiled-coil region" evidence="5">
    <location>
        <begin position="698"/>
        <end position="726"/>
    </location>
</feature>
<feature type="coiled-coil region" evidence="5">
    <location>
        <begin position="727"/>
        <end position="809"/>
    </location>
</feature>
<feature type="coiled-coil region" evidence="5">
    <location>
        <begin position="814"/>
        <end position="902"/>
    </location>
</feature>
<feature type="binding site" evidence="2">
    <location>
        <position position="13"/>
    </location>
    <ligand>
        <name>ATP</name>
        <dbReference type="ChEBI" id="CHEBI:30616"/>
    </ligand>
</feature>
<feature type="binding site" evidence="2">
    <location>
        <position position="36"/>
    </location>
    <ligand>
        <name>ATP</name>
        <dbReference type="ChEBI" id="CHEBI:30616"/>
    </ligand>
</feature>
<feature type="binding site" evidence="2">
    <location>
        <position position="37"/>
    </location>
    <ligand>
        <name>ATP</name>
        <dbReference type="ChEBI" id="CHEBI:30616"/>
    </ligand>
</feature>
<feature type="binding site" evidence="2">
    <location>
        <position position="39"/>
    </location>
    <ligand>
        <name>ATP</name>
        <dbReference type="ChEBI" id="CHEBI:30616"/>
    </ligand>
</feature>
<feature type="binding site" evidence="2">
    <location>
        <position position="40"/>
    </location>
    <ligand>
        <name>ATP</name>
        <dbReference type="ChEBI" id="CHEBI:30616"/>
    </ligand>
</feature>
<feature type="binding site" evidence="2">
    <location>
        <position position="41"/>
    </location>
    <ligand>
        <name>ATP</name>
        <dbReference type="ChEBI" id="CHEBI:30616"/>
    </ligand>
</feature>
<feature type="binding site" evidence="2">
    <location>
        <position position="41"/>
    </location>
    <ligand>
        <name>Mg(2+)</name>
        <dbReference type="ChEBI" id="CHEBI:18420"/>
    </ligand>
</feature>
<feature type="binding site" evidence="2">
    <location>
        <position position="42"/>
    </location>
    <ligand>
        <name>ATP</name>
        <dbReference type="ChEBI" id="CHEBI:30616"/>
    </ligand>
</feature>
<feature type="binding site" evidence="2">
    <location>
        <position position="65"/>
    </location>
    <ligand>
        <name>ATP</name>
        <dbReference type="ChEBI" id="CHEBI:30616"/>
    </ligand>
</feature>
<feature type="binding site" evidence="2">
    <location>
        <position position="67"/>
    </location>
    <ligand>
        <name>ATP</name>
        <dbReference type="ChEBI" id="CHEBI:30616"/>
    </ligand>
</feature>
<feature type="binding site" evidence="2">
    <location>
        <position position="157"/>
    </location>
    <ligand>
        <name>ATP</name>
        <dbReference type="ChEBI" id="CHEBI:30616"/>
    </ligand>
</feature>
<feature type="binding site" evidence="2">
    <location>
        <position position="157"/>
    </location>
    <ligand>
        <name>Mg(2+)</name>
        <dbReference type="ChEBI" id="CHEBI:18420"/>
    </ligand>
</feature>
<feature type="binding site" evidence="6">
    <location>
        <position position="674"/>
    </location>
    <ligand>
        <name>Zn(2+)</name>
        <dbReference type="ChEBI" id="CHEBI:29105"/>
    </ligand>
</feature>
<feature type="binding site" evidence="6">
    <location>
        <position position="677"/>
    </location>
    <ligand>
        <name>Zn(2+)</name>
        <dbReference type="ChEBI" id="CHEBI:29105"/>
    </ligand>
</feature>
<evidence type="ECO:0000250" key="1"/>
<evidence type="ECO:0000250" key="2">
    <source>
        <dbReference type="UniProtKB" id="G0SHW7"/>
    </source>
</evidence>
<evidence type="ECO:0000250" key="3">
    <source>
        <dbReference type="UniProtKB" id="Q92878"/>
    </source>
</evidence>
<evidence type="ECO:0000250" key="4">
    <source>
        <dbReference type="UniProtKB" id="Q9X1X1"/>
    </source>
</evidence>
<evidence type="ECO:0000255" key="5"/>
<evidence type="ECO:0000255" key="6">
    <source>
        <dbReference type="PROSITE-ProRule" id="PRU00471"/>
    </source>
</evidence>
<evidence type="ECO:0000269" key="7">
    <source>
    </source>
</evidence>
<evidence type="ECO:0000269" key="8">
    <source>
    </source>
</evidence>
<evidence type="ECO:0000269" key="9">
    <source>
    </source>
</evidence>
<evidence type="ECO:0000305" key="10"/>
<accession>Q9UTJ8</accession>
<accession>Q9P3T5</accession>
<dbReference type="EC" id="3.6.-.-" evidence="3"/>
<dbReference type="EMBL" id="CU329670">
    <property type="protein sequence ID" value="CAB96041.3"/>
    <property type="molecule type" value="Genomic_DNA"/>
</dbReference>
<dbReference type="PIR" id="T50080">
    <property type="entry name" value="T50080"/>
</dbReference>
<dbReference type="RefSeq" id="XP_001713090.2">
    <property type="nucleotide sequence ID" value="XM_001713038.3"/>
</dbReference>
<dbReference type="SMR" id="Q9UTJ8"/>
<dbReference type="BioGRID" id="278131">
    <property type="interactions" value="33"/>
</dbReference>
<dbReference type="ComplexPortal" id="CPX-10302">
    <property type="entry name" value="MRN double-strand break repair complex"/>
</dbReference>
<dbReference type="DIP" id="DIP-52389N"/>
<dbReference type="FunCoup" id="Q9UTJ8">
    <property type="interactions" value="667"/>
</dbReference>
<dbReference type="IntAct" id="Q9UTJ8">
    <property type="interactions" value="1"/>
</dbReference>
<dbReference type="STRING" id="284812.Q9UTJ8"/>
<dbReference type="iPTMnet" id="Q9UTJ8"/>
<dbReference type="PaxDb" id="4896-SPAC1556.01c.1"/>
<dbReference type="EnsemblFungi" id="SPAC1556.01c.1">
    <property type="protein sequence ID" value="SPAC1556.01c.1:pep"/>
    <property type="gene ID" value="SPAC1556.01c"/>
</dbReference>
<dbReference type="PomBase" id="SPAC1556.01c">
    <property type="gene designation" value="rad50"/>
</dbReference>
<dbReference type="VEuPathDB" id="FungiDB:SPAC1556.01c"/>
<dbReference type="eggNOG" id="KOG0962">
    <property type="taxonomic scope" value="Eukaryota"/>
</dbReference>
<dbReference type="HOGENOM" id="CLU_006184_0_0_1"/>
<dbReference type="InParanoid" id="Q9UTJ8"/>
<dbReference type="OMA" id="FSDYYYR"/>
<dbReference type="PhylomeDB" id="Q9UTJ8"/>
<dbReference type="Reactome" id="R-SPO-2559586">
    <property type="pathway name" value="DNA Damage/Telomere Stress Induced Senescence"/>
</dbReference>
<dbReference type="Reactome" id="R-SPO-5685939">
    <property type="pathway name" value="HDR through MMEJ (alt-NHEJ)"/>
</dbReference>
<dbReference type="Reactome" id="R-SPO-5693548">
    <property type="pathway name" value="Sensing of DNA Double Strand Breaks"/>
</dbReference>
<dbReference type="Reactome" id="R-SPO-5693565">
    <property type="pathway name" value="Recruitment and ATM-mediated phosphorylation of repair and signaling proteins at DNA double strand breaks"/>
</dbReference>
<dbReference type="Reactome" id="R-SPO-5693607">
    <property type="pathway name" value="Processing of DNA double-strand break ends"/>
</dbReference>
<dbReference type="PRO" id="PR:Q9UTJ8"/>
<dbReference type="Proteomes" id="UP000002485">
    <property type="component" value="Chromosome I"/>
</dbReference>
<dbReference type="GO" id="GO:0000785">
    <property type="term" value="C:chromatin"/>
    <property type="evidence" value="ECO:0000305"/>
    <property type="project" value="PomBase"/>
</dbReference>
<dbReference type="GO" id="GO:0000794">
    <property type="term" value="C:condensed nuclear chromosome"/>
    <property type="evidence" value="ECO:0000318"/>
    <property type="project" value="GO_Central"/>
</dbReference>
<dbReference type="GO" id="GO:0030870">
    <property type="term" value="C:Mre11 complex"/>
    <property type="evidence" value="ECO:0000353"/>
    <property type="project" value="PomBase"/>
</dbReference>
<dbReference type="GO" id="GO:0035861">
    <property type="term" value="C:site of double-strand break"/>
    <property type="evidence" value="ECO:0000314"/>
    <property type="project" value="PomBase"/>
</dbReference>
<dbReference type="GO" id="GO:0005524">
    <property type="term" value="F:ATP binding"/>
    <property type="evidence" value="ECO:0000255"/>
    <property type="project" value="PomBase"/>
</dbReference>
<dbReference type="GO" id="GO:0016887">
    <property type="term" value="F:ATP hydrolysis activity"/>
    <property type="evidence" value="ECO:0000303"/>
    <property type="project" value="PomBase"/>
</dbReference>
<dbReference type="GO" id="GO:0045027">
    <property type="term" value="F:DNA end binding"/>
    <property type="evidence" value="ECO:0000269"/>
    <property type="project" value="PomBase"/>
</dbReference>
<dbReference type="GO" id="GO:0003678">
    <property type="term" value="F:DNA helicase activity"/>
    <property type="evidence" value="ECO:0000266"/>
    <property type="project" value="PomBase"/>
</dbReference>
<dbReference type="GO" id="GO:0003691">
    <property type="term" value="F:double-stranded telomeric DNA binding"/>
    <property type="evidence" value="ECO:0000318"/>
    <property type="project" value="GO_Central"/>
</dbReference>
<dbReference type="GO" id="GO:0051880">
    <property type="term" value="F:G-quadruplex DNA binding"/>
    <property type="evidence" value="ECO:0000318"/>
    <property type="project" value="GO_Central"/>
</dbReference>
<dbReference type="GO" id="GO:0046872">
    <property type="term" value="F:metal ion binding"/>
    <property type="evidence" value="ECO:0007669"/>
    <property type="project" value="UniProtKB-KW"/>
</dbReference>
<dbReference type="GO" id="GO:0043047">
    <property type="term" value="F:single-stranded telomeric DNA binding"/>
    <property type="evidence" value="ECO:0000318"/>
    <property type="project" value="GO_Central"/>
</dbReference>
<dbReference type="GO" id="GO:0070192">
    <property type="term" value="P:chromosome organization involved in meiotic cell cycle"/>
    <property type="evidence" value="ECO:0000318"/>
    <property type="project" value="GO_Central"/>
</dbReference>
<dbReference type="GO" id="GO:0000729">
    <property type="term" value="P:DNA double-strand break processing"/>
    <property type="evidence" value="ECO:0000315"/>
    <property type="project" value="PomBase"/>
</dbReference>
<dbReference type="GO" id="GO:0006302">
    <property type="term" value="P:double-strand break repair"/>
    <property type="evidence" value="ECO:0000318"/>
    <property type="project" value="GO_Central"/>
</dbReference>
<dbReference type="GO" id="GO:1990918">
    <property type="term" value="P:double-strand break repair involved in meiotic recombination"/>
    <property type="evidence" value="ECO:0000315"/>
    <property type="project" value="PomBase"/>
</dbReference>
<dbReference type="GO" id="GO:0000724">
    <property type="term" value="P:double-strand break repair via homologous recombination"/>
    <property type="evidence" value="ECO:0000305"/>
    <property type="project" value="PomBase"/>
</dbReference>
<dbReference type="GO" id="GO:0006303">
    <property type="term" value="P:double-strand break repair via nonhomologous end joining"/>
    <property type="evidence" value="ECO:0000315"/>
    <property type="project" value="CACAO"/>
</dbReference>
<dbReference type="GO" id="GO:0007534">
    <property type="term" value="P:gene conversion at mating-type locus"/>
    <property type="evidence" value="ECO:0000315"/>
    <property type="project" value="PomBase"/>
</dbReference>
<dbReference type="GO" id="GO:0042138">
    <property type="term" value="P:meiotic DNA double-strand break formation"/>
    <property type="evidence" value="ECO:0000315"/>
    <property type="project" value="PomBase"/>
</dbReference>
<dbReference type="GO" id="GO:0031573">
    <property type="term" value="P:mitotic intra-S DNA damage checkpoint signaling"/>
    <property type="evidence" value="ECO:0000315"/>
    <property type="project" value="PomBase"/>
</dbReference>
<dbReference type="GO" id="GO:1990426">
    <property type="term" value="P:mitotic recombination-dependent replication fork processing"/>
    <property type="evidence" value="ECO:0000315"/>
    <property type="project" value="PomBase"/>
</dbReference>
<dbReference type="GO" id="GO:0010520">
    <property type="term" value="P:regulation of reciprocal meiotic recombination"/>
    <property type="evidence" value="ECO:0000315"/>
    <property type="project" value="PomBase"/>
</dbReference>
<dbReference type="GO" id="GO:0031297">
    <property type="term" value="P:replication fork processing"/>
    <property type="evidence" value="ECO:0000315"/>
    <property type="project" value="PomBase"/>
</dbReference>
<dbReference type="GO" id="GO:0120290">
    <property type="term" value="P:stalled replication fork localization to nuclear periphery"/>
    <property type="evidence" value="ECO:0000315"/>
    <property type="project" value="PomBase"/>
</dbReference>
<dbReference type="GO" id="GO:0000723">
    <property type="term" value="P:telomere maintenance"/>
    <property type="evidence" value="ECO:0000316"/>
    <property type="project" value="PomBase"/>
</dbReference>
<dbReference type="GO" id="GO:0000722">
    <property type="term" value="P:telomere maintenance via recombination"/>
    <property type="evidence" value="ECO:0000316"/>
    <property type="project" value="PomBase"/>
</dbReference>
<dbReference type="GO" id="GO:0007004">
    <property type="term" value="P:telomere maintenance via telomerase"/>
    <property type="evidence" value="ECO:0000318"/>
    <property type="project" value="GO_Central"/>
</dbReference>
<dbReference type="FunFam" id="3.40.50.300:FF:000593">
    <property type="entry name" value="DNA repair protein RAD50"/>
    <property type="match status" value="1"/>
</dbReference>
<dbReference type="FunFam" id="3.40.50.300:FF:001195">
    <property type="entry name" value="DNA repair protein rad50"/>
    <property type="match status" value="1"/>
</dbReference>
<dbReference type="Gene3D" id="3.40.50.300">
    <property type="entry name" value="P-loop containing nucleotide triphosphate hydrolases"/>
    <property type="match status" value="2"/>
</dbReference>
<dbReference type="InterPro" id="IPR027417">
    <property type="entry name" value="P-loop_NTPase"/>
</dbReference>
<dbReference type="InterPro" id="IPR038729">
    <property type="entry name" value="Rad50/SbcC_AAA"/>
</dbReference>
<dbReference type="InterPro" id="IPR004584">
    <property type="entry name" value="Rad50_eukaryotes"/>
</dbReference>
<dbReference type="InterPro" id="IPR013134">
    <property type="entry name" value="Zn_hook_RAD50"/>
</dbReference>
<dbReference type="NCBIfam" id="TIGR00606">
    <property type="entry name" value="rad50"/>
    <property type="match status" value="1"/>
</dbReference>
<dbReference type="PANTHER" id="PTHR18867:SF12">
    <property type="entry name" value="DNA REPAIR PROTEIN RAD50"/>
    <property type="match status" value="1"/>
</dbReference>
<dbReference type="PANTHER" id="PTHR18867">
    <property type="entry name" value="RAD50"/>
    <property type="match status" value="1"/>
</dbReference>
<dbReference type="Pfam" id="PF13476">
    <property type="entry name" value="AAA_23"/>
    <property type="match status" value="1"/>
</dbReference>
<dbReference type="SUPFAM" id="SSF52540">
    <property type="entry name" value="P-loop containing nucleoside triphosphate hydrolases"/>
    <property type="match status" value="2"/>
</dbReference>
<dbReference type="PROSITE" id="PS51131">
    <property type="entry name" value="ZN_HOOK"/>
    <property type="match status" value="1"/>
</dbReference>
<reference key="1">
    <citation type="journal article" date="2001" name="EMBO J.">
        <title>Fission yeast Rad50 stimulates sister chromatid recombination and links cohesion with repair.</title>
        <authorList>
            <person name="Hartsuiker E."/>
            <person name="Vaessen E."/>
            <person name="Carr A.M."/>
            <person name="Kohli J."/>
        </authorList>
    </citation>
    <scope>NUCLEOTIDE SEQUENCE [GENOMIC DNA]</scope>
    <scope>FUNCTION</scope>
    <scope>INTERACTION WITH RAD21 COHESIN COMPLEX</scope>
</reference>
<reference key="2">
    <citation type="journal article" date="2002" name="Nature">
        <title>The genome sequence of Schizosaccharomyces pombe.</title>
        <authorList>
            <person name="Wood V."/>
            <person name="Gwilliam R."/>
            <person name="Rajandream M.A."/>
            <person name="Lyne M.H."/>
            <person name="Lyne R."/>
            <person name="Stewart A."/>
            <person name="Sgouros J.G."/>
            <person name="Peat N."/>
            <person name="Hayles J."/>
            <person name="Baker S.G."/>
            <person name="Basham D."/>
            <person name="Bowman S."/>
            <person name="Brooks K."/>
            <person name="Brown D."/>
            <person name="Brown S."/>
            <person name="Chillingworth T."/>
            <person name="Churcher C.M."/>
            <person name="Collins M."/>
            <person name="Connor R."/>
            <person name="Cronin A."/>
            <person name="Davis P."/>
            <person name="Feltwell T."/>
            <person name="Fraser A."/>
            <person name="Gentles S."/>
            <person name="Goble A."/>
            <person name="Hamlin N."/>
            <person name="Harris D.E."/>
            <person name="Hidalgo J."/>
            <person name="Hodgson G."/>
            <person name="Holroyd S."/>
            <person name="Hornsby T."/>
            <person name="Howarth S."/>
            <person name="Huckle E.J."/>
            <person name="Hunt S."/>
            <person name="Jagels K."/>
            <person name="James K.D."/>
            <person name="Jones L."/>
            <person name="Jones M."/>
            <person name="Leather S."/>
            <person name="McDonald S."/>
            <person name="McLean J."/>
            <person name="Mooney P."/>
            <person name="Moule S."/>
            <person name="Mungall K.L."/>
            <person name="Murphy L.D."/>
            <person name="Niblett D."/>
            <person name="Odell C."/>
            <person name="Oliver K."/>
            <person name="O'Neil S."/>
            <person name="Pearson D."/>
            <person name="Quail M.A."/>
            <person name="Rabbinowitsch E."/>
            <person name="Rutherford K.M."/>
            <person name="Rutter S."/>
            <person name="Saunders D."/>
            <person name="Seeger K."/>
            <person name="Sharp S."/>
            <person name="Skelton J."/>
            <person name="Simmonds M.N."/>
            <person name="Squares R."/>
            <person name="Squares S."/>
            <person name="Stevens K."/>
            <person name="Taylor K."/>
            <person name="Taylor R.G."/>
            <person name="Tivey A."/>
            <person name="Walsh S.V."/>
            <person name="Warren T."/>
            <person name="Whitehead S."/>
            <person name="Woodward J.R."/>
            <person name="Volckaert G."/>
            <person name="Aert R."/>
            <person name="Robben J."/>
            <person name="Grymonprez B."/>
            <person name="Weltjens I."/>
            <person name="Vanstreels E."/>
            <person name="Rieger M."/>
            <person name="Schaefer M."/>
            <person name="Mueller-Auer S."/>
            <person name="Gabel C."/>
            <person name="Fuchs M."/>
            <person name="Duesterhoeft A."/>
            <person name="Fritzc C."/>
            <person name="Holzer E."/>
            <person name="Moestl D."/>
            <person name="Hilbert H."/>
            <person name="Borzym K."/>
            <person name="Langer I."/>
            <person name="Beck A."/>
            <person name="Lehrach H."/>
            <person name="Reinhardt R."/>
            <person name="Pohl T.M."/>
            <person name="Eger P."/>
            <person name="Zimmermann W."/>
            <person name="Wedler H."/>
            <person name="Wambutt R."/>
            <person name="Purnelle B."/>
            <person name="Goffeau A."/>
            <person name="Cadieu E."/>
            <person name="Dreano S."/>
            <person name="Gloux S."/>
            <person name="Lelaure V."/>
            <person name="Mottier S."/>
            <person name="Galibert F."/>
            <person name="Aves S.J."/>
            <person name="Xiang Z."/>
            <person name="Hunt C."/>
            <person name="Moore K."/>
            <person name="Hurst S.M."/>
            <person name="Lucas M."/>
            <person name="Rochet M."/>
            <person name="Gaillardin C."/>
            <person name="Tallada V.A."/>
            <person name="Garzon A."/>
            <person name="Thode G."/>
            <person name="Daga R.R."/>
            <person name="Cruzado L."/>
            <person name="Jimenez J."/>
            <person name="Sanchez M."/>
            <person name="del Rey F."/>
            <person name="Benito J."/>
            <person name="Dominguez A."/>
            <person name="Revuelta J.L."/>
            <person name="Moreno S."/>
            <person name="Armstrong J."/>
            <person name="Forsburg S.L."/>
            <person name="Cerutti L."/>
            <person name="Lowe T."/>
            <person name="McCombie W.R."/>
            <person name="Paulsen I."/>
            <person name="Potashkin J."/>
            <person name="Shpakovski G.V."/>
            <person name="Ussery D."/>
            <person name="Barrell B.G."/>
            <person name="Nurse P."/>
        </authorList>
    </citation>
    <scope>NUCLEOTIDE SEQUENCE [LARGE SCALE GENOMIC DNA]</scope>
    <source>
        <strain>972 / ATCC 24843</strain>
    </source>
</reference>
<reference key="3">
    <citation type="journal article" date="2003" name="Mol. Cell. Biol.">
        <title>The fission yeast Rad32 (Mre11)-Rad50-Nbs1 complex is required for the S-phase DNA damage checkpoint.</title>
        <authorList>
            <person name="Chahwan C."/>
            <person name="Nakamura T.M."/>
            <person name="Sivakumar S."/>
            <person name="Russell P."/>
            <person name="Rhind N."/>
        </authorList>
    </citation>
    <scope>SUBUNIT</scope>
    <scope>SUBCELLULAR LOCATION</scope>
</reference>
<reference key="4">
    <citation type="journal article" date="2005" name="Genetics">
        <title>A novel recombination pathway initiated by the Mre11/Rad50/Nbs1 complex eliminates palindromes during meiosis in Schizosaccharomyces pombe.</title>
        <authorList>
            <person name="Farah J.A."/>
            <person name="Cromie G."/>
            <person name="Steiner W.W."/>
            <person name="Smith G.R."/>
        </authorList>
    </citation>
    <scope>FUNCTION</scope>
    <scope>SUBUNIT</scope>
</reference>
<sequence length="1285" mass="149029">MSCIDRMSIMGIRSFDNRSRESIQFFSPLTLIVGQNGSGKTTIIECLKYATTGILPPNTKGGAFIHDPKICGEKEVLAQVKLAFRNTNQVKMICTRSLQLSVKKTTRQQKTLDGQLLILKDNERTTISNRCAELDSQVPLSLGVSKALLDYVIFCHQEESFWPLSEPANLKKRFDEIFESLRYAKALDQIKGLKRDQETQVKVDQATLTHYRSDKERAEKIELRVHESLKRISCIRSKVEELDQEITETARLQDELFKSTEEYEQQMITIRHLESQSDIINTTINDLKSQMTITDESSEDLEKLHSNFAEKVKEEQELYKSLEKKRSDLESLLKSRRELLEKLTGDLGKIQGEIESLEKLKVKKSTMINEIVHRYNINEINEEGIMTEVSKYASLVNKNYEISSGKLKERQVAVRARIEGIKAHEMFLNNRVSEINSSLEKQLTTQKELRSRFEILFPVKLQREDFTKDVEKSDLWIKSLRQEYESKNLLELLDKHQTALSSVENRLDEISEIVDSYHKYSGVRTKLQVFEENKTNKSAILANQLMTLKSSFSEVMSYELKDDDNYNEELDKLVEDVRKKLQEKEEAESSLRSVRERLEIRISLSVQSINDLTENKKIKTKTLKSYSGTFASMISEIKALESEIEENRKTLHSLQFGSTFYEKAIEICVDQHACQLCQRSLDKEEEKLFVEHCHSMIDVIPSKSAEVYSHLETLTKTFKNLSEAKPIFDEIELLDKRLSETKTELSDLQGDLQGLDIRKDEIQSELDTLYLRRANLEKLQLLVKDISNLEEEIRTIDRETEVLRIELPSSIAHHNLDEIYAEREKLLEKRGYLRKQIERTKLEETSFKKKIDDAVLANNEQKLKLTKLNFQVNELEQLEKDINKSSEDCDLQKKKLLEVSSKQGSQAPFLNELESEYEKLEADIQEMAQKSRTEILEANEYLHQLNEWNSELRIDVSTKFKCIKEKKSNIGEEVRIIASKIESTDDNLRKLQERLADLRTRERNASDNLRLRALMRQLEEAVTQKNYLLSQQSHDDRESFRERMQILKSKYGALNAERAGLLGECKQLENSITKDKEELNMEFKDADERFRRQLIKTKTTGKANEDLGKYAKALDVAIMQLHSMKMNEINRIVDELWKQTYCGTDIDTILIRSDSEGKGNRTYNYRVCMVKGDAELDMRGRCSAGQKVLACIIIRLALAECLGVNCGILALDEPTTNLDEENICSLAKNLSRIVEFRRKQANFQLIVITHDEQFIRLVNSDAYCSYYYRVKRDTNQKSMIVKEPL</sequence>
<gene>
    <name type="primary">rad50</name>
    <name type="ORF">SPAC1556.01c</name>
    <name type="ORF">SPAP4C9.01c</name>
</gene>